<keyword id="KW-0233">DNA recombination</keyword>
<keyword id="KW-0238">DNA-binding</keyword>
<keyword id="KW-0814">Transposable element</keyword>
<keyword id="KW-0815">Transposition</keyword>
<feature type="chain" id="PRO_0000393749" description="Transposase InsE for insertion sequence IS3">
    <location>
        <begin position="1"/>
        <end position="99"/>
    </location>
</feature>
<feature type="region of interest" description="Disordered" evidence="1">
    <location>
        <begin position="1"/>
        <end position="21"/>
    </location>
</feature>
<organism>
    <name type="scientific">Escherichia coli O111:H-</name>
    <dbReference type="NCBI Taxonomy" id="168927"/>
    <lineage>
        <taxon>Bacteria</taxon>
        <taxon>Pseudomonadati</taxon>
        <taxon>Pseudomonadota</taxon>
        <taxon>Gammaproteobacteria</taxon>
        <taxon>Enterobacterales</taxon>
        <taxon>Enterobacteriaceae</taxon>
        <taxon>Escherichia</taxon>
    </lineage>
</organism>
<comment type="function">
    <text>Involved in the transposition of the insertion sequence IS3.</text>
</comment>
<comment type="similarity">
    <text evidence="2">Belongs to the transposase 8 family.</text>
</comment>
<protein>
    <recommendedName>
        <fullName>Transposase InsE for insertion sequence IS3</fullName>
    </recommendedName>
</protein>
<evidence type="ECO:0000256" key="1">
    <source>
        <dbReference type="SAM" id="MobiDB-lite"/>
    </source>
</evidence>
<evidence type="ECO:0000305" key="2"/>
<name>INSEC_ECO11</name>
<accession>P0CF73</accession>
<accession>P0ADH3</accession>
<accession>P77681</accession>
<accession>Q2MCC3</accession>
<accession>Q9S136</accession>
<reference key="1">
    <citation type="journal article" date="1998" name="FEMS Microbiol. Lett.">
        <title>Characterization of the locus of enterocyte effacement (LEE) in different enteropathogenic Escherichia coli (EPEC) and Shiga-toxin producing Escherichia coli (STEC) serotypes.</title>
        <authorList>
            <person name="Sperandio V."/>
            <person name="Kaper J.B."/>
            <person name="Bortolini M.R."/>
            <person name="Neves B.C."/>
            <person name="Keller R."/>
            <person name="Trabulsi L.R."/>
        </authorList>
    </citation>
    <scope>NUCLEOTIDE SEQUENCE [GENOMIC DNA]</scope>
    <source>
        <strain>O111ac:H- / 172 / EPEC</strain>
    </source>
</reference>
<dbReference type="EMBL" id="AH006325">
    <property type="protein sequence ID" value="AAC28568.1"/>
    <property type="molecule type" value="Genomic_DNA"/>
</dbReference>
<dbReference type="RefSeq" id="YP_001965396.1">
    <property type="nucleotide sequence ID" value="NC_010862.1"/>
</dbReference>
<dbReference type="RefSeq" id="YP_006952411.1">
    <property type="nucleotide sequence ID" value="NC_019062.1"/>
</dbReference>
<dbReference type="RefSeq" id="YP_008531409.1">
    <property type="nucleotide sequence ID" value="NC_022333.1"/>
</dbReference>
<dbReference type="RefSeq" id="YP_008531479.1">
    <property type="nucleotide sequence ID" value="NC_022333.1"/>
</dbReference>
<dbReference type="RefSeq" id="YP_009071421.1">
    <property type="nucleotide sequence ID" value="NC_025182.1"/>
</dbReference>
<dbReference type="RefSeq" id="YP_308817.1">
    <property type="nucleotide sequence ID" value="NC_007365.1"/>
</dbReference>
<dbReference type="SMR" id="P0CF73"/>
<dbReference type="OMA" id="LHESQIY"/>
<dbReference type="GO" id="GO:0003677">
    <property type="term" value="F:DNA binding"/>
    <property type="evidence" value="ECO:0007669"/>
    <property type="project" value="UniProtKB-KW"/>
</dbReference>
<dbReference type="GO" id="GO:0004803">
    <property type="term" value="F:transposase activity"/>
    <property type="evidence" value="ECO:0007669"/>
    <property type="project" value="InterPro"/>
</dbReference>
<dbReference type="GO" id="GO:0006313">
    <property type="term" value="P:DNA transposition"/>
    <property type="evidence" value="ECO:0007669"/>
    <property type="project" value="InterPro"/>
</dbReference>
<dbReference type="InterPro" id="IPR009057">
    <property type="entry name" value="Homeodomain-like_sf"/>
</dbReference>
<dbReference type="InterPro" id="IPR051839">
    <property type="entry name" value="RD_transcriptional_regulator"/>
</dbReference>
<dbReference type="InterPro" id="IPR002514">
    <property type="entry name" value="Transposase_8"/>
</dbReference>
<dbReference type="PANTHER" id="PTHR33215">
    <property type="entry name" value="PROTEIN DISTAL ANTENNA"/>
    <property type="match status" value="1"/>
</dbReference>
<dbReference type="PANTHER" id="PTHR33215:SF6">
    <property type="entry name" value="TRANSPOSASE INSE FOR INSERTION SEQUENCE IS3A-RELATED"/>
    <property type="match status" value="1"/>
</dbReference>
<dbReference type="Pfam" id="PF01527">
    <property type="entry name" value="HTH_Tnp_1"/>
    <property type="match status" value="1"/>
</dbReference>
<dbReference type="SUPFAM" id="SSF46689">
    <property type="entry name" value="Homeodomain-like"/>
    <property type="match status" value="1"/>
</dbReference>
<proteinExistence type="inferred from homology"/>
<sequence length="99" mass="11543">MTKTVSTSKKPRKQHSPEFRSEALKLAERIGVTAAARELSLYESQLYNWRSKQQNQQTSSERELEMSTEIARLKRQLAERDEELAILQKAATYFAKRLK</sequence>